<dbReference type="EC" id="1.14.11.-" evidence="1"/>
<dbReference type="EMBL" id="CP000447">
    <property type="protein sequence ID" value="ABI70472.1"/>
    <property type="molecule type" value="Genomic_DNA"/>
</dbReference>
<dbReference type="RefSeq" id="WP_011636099.1">
    <property type="nucleotide sequence ID" value="NC_008345.1"/>
</dbReference>
<dbReference type="SMR" id="Q087U3"/>
<dbReference type="STRING" id="318167.Sfri_0612"/>
<dbReference type="DNASU" id="4278534"/>
<dbReference type="KEGG" id="sfr:Sfri_0612"/>
<dbReference type="eggNOG" id="COG3128">
    <property type="taxonomic scope" value="Bacteria"/>
</dbReference>
<dbReference type="HOGENOM" id="CLU_106663_0_0_6"/>
<dbReference type="OrthoDB" id="9812472at2"/>
<dbReference type="Proteomes" id="UP000000684">
    <property type="component" value="Chromosome"/>
</dbReference>
<dbReference type="GO" id="GO:0016706">
    <property type="term" value="F:2-oxoglutarate-dependent dioxygenase activity"/>
    <property type="evidence" value="ECO:0007669"/>
    <property type="project" value="UniProtKB-UniRule"/>
</dbReference>
<dbReference type="GO" id="GO:0005506">
    <property type="term" value="F:iron ion binding"/>
    <property type="evidence" value="ECO:0007669"/>
    <property type="project" value="UniProtKB-UniRule"/>
</dbReference>
<dbReference type="GO" id="GO:0031418">
    <property type="term" value="F:L-ascorbic acid binding"/>
    <property type="evidence" value="ECO:0007669"/>
    <property type="project" value="UniProtKB-KW"/>
</dbReference>
<dbReference type="GO" id="GO:0006974">
    <property type="term" value="P:DNA damage response"/>
    <property type="evidence" value="ECO:0007669"/>
    <property type="project" value="TreeGrafter"/>
</dbReference>
<dbReference type="GO" id="GO:0006879">
    <property type="term" value="P:intracellular iron ion homeostasis"/>
    <property type="evidence" value="ECO:0007669"/>
    <property type="project" value="TreeGrafter"/>
</dbReference>
<dbReference type="Gene3D" id="2.60.120.620">
    <property type="entry name" value="q2cbj1_9rhob like domain"/>
    <property type="match status" value="1"/>
</dbReference>
<dbReference type="Gene3D" id="4.10.860.20">
    <property type="entry name" value="Rabenosyn, Rab binding domain"/>
    <property type="match status" value="1"/>
</dbReference>
<dbReference type="HAMAP" id="MF_00657">
    <property type="entry name" value="Hydroxyl_YbiX"/>
    <property type="match status" value="1"/>
</dbReference>
<dbReference type="InterPro" id="IPR005123">
    <property type="entry name" value="Oxoglu/Fe-dep_dioxygenase_dom"/>
</dbReference>
<dbReference type="InterPro" id="IPR041097">
    <property type="entry name" value="PKHD_C"/>
</dbReference>
<dbReference type="InterPro" id="IPR023550">
    <property type="entry name" value="PKHD_hydroxylase"/>
</dbReference>
<dbReference type="InterPro" id="IPR006620">
    <property type="entry name" value="Pro_4_hyd_alph"/>
</dbReference>
<dbReference type="InterPro" id="IPR044862">
    <property type="entry name" value="Pro_4_hyd_alph_FE2OG_OXY"/>
</dbReference>
<dbReference type="NCBIfam" id="NF003974">
    <property type="entry name" value="PRK05467.1-3"/>
    <property type="match status" value="1"/>
</dbReference>
<dbReference type="NCBIfam" id="NF003975">
    <property type="entry name" value="PRK05467.1-4"/>
    <property type="match status" value="1"/>
</dbReference>
<dbReference type="PANTHER" id="PTHR41536">
    <property type="entry name" value="PKHD-TYPE HYDROXYLASE YBIX"/>
    <property type="match status" value="1"/>
</dbReference>
<dbReference type="PANTHER" id="PTHR41536:SF1">
    <property type="entry name" value="PKHD-TYPE HYDROXYLASE YBIX"/>
    <property type="match status" value="1"/>
</dbReference>
<dbReference type="Pfam" id="PF13640">
    <property type="entry name" value="2OG-FeII_Oxy_3"/>
    <property type="match status" value="1"/>
</dbReference>
<dbReference type="Pfam" id="PF18331">
    <property type="entry name" value="PKHD_C"/>
    <property type="match status" value="1"/>
</dbReference>
<dbReference type="SMART" id="SM00702">
    <property type="entry name" value="P4Hc"/>
    <property type="match status" value="1"/>
</dbReference>
<dbReference type="PROSITE" id="PS51471">
    <property type="entry name" value="FE2OG_OXY"/>
    <property type="match status" value="1"/>
</dbReference>
<evidence type="ECO:0000255" key="1">
    <source>
        <dbReference type="HAMAP-Rule" id="MF_00657"/>
    </source>
</evidence>
<keyword id="KW-0223">Dioxygenase</keyword>
<keyword id="KW-0408">Iron</keyword>
<keyword id="KW-0479">Metal-binding</keyword>
<keyword id="KW-0560">Oxidoreductase</keyword>
<keyword id="KW-1185">Reference proteome</keyword>
<keyword id="KW-0847">Vitamin C</keyword>
<reference key="1">
    <citation type="submission" date="2006-08" db="EMBL/GenBank/DDBJ databases">
        <title>Complete sequence of Shewanella frigidimarina NCIMB 400.</title>
        <authorList>
            <consortium name="US DOE Joint Genome Institute"/>
            <person name="Copeland A."/>
            <person name="Lucas S."/>
            <person name="Lapidus A."/>
            <person name="Barry K."/>
            <person name="Detter J.C."/>
            <person name="Glavina del Rio T."/>
            <person name="Hammon N."/>
            <person name="Israni S."/>
            <person name="Dalin E."/>
            <person name="Tice H."/>
            <person name="Pitluck S."/>
            <person name="Fredrickson J.K."/>
            <person name="Kolker E."/>
            <person name="McCuel L.A."/>
            <person name="DiChristina T."/>
            <person name="Nealson K.H."/>
            <person name="Newman D."/>
            <person name="Tiedje J.M."/>
            <person name="Zhou J."/>
            <person name="Romine M.F."/>
            <person name="Culley D.E."/>
            <person name="Serres M."/>
            <person name="Chertkov O."/>
            <person name="Brettin T."/>
            <person name="Bruce D."/>
            <person name="Han C."/>
            <person name="Tapia R."/>
            <person name="Gilna P."/>
            <person name="Schmutz J."/>
            <person name="Larimer F."/>
            <person name="Land M."/>
            <person name="Hauser L."/>
            <person name="Kyrpides N."/>
            <person name="Mikhailova N."/>
            <person name="Richardson P."/>
        </authorList>
    </citation>
    <scope>NUCLEOTIDE SEQUENCE [LARGE SCALE GENOMIC DNA]</scope>
    <source>
        <strain>NCIMB 400</strain>
    </source>
</reference>
<protein>
    <recommendedName>
        <fullName evidence="1">PKHD-type hydroxylase Sfri_0612</fullName>
        <ecNumber evidence="1">1.14.11.-</ecNumber>
    </recommendedName>
</protein>
<organism>
    <name type="scientific">Shewanella frigidimarina (strain NCIMB 400)</name>
    <dbReference type="NCBI Taxonomy" id="318167"/>
    <lineage>
        <taxon>Bacteria</taxon>
        <taxon>Pseudomonadati</taxon>
        <taxon>Pseudomonadota</taxon>
        <taxon>Gammaproteobacteria</taxon>
        <taxon>Alteromonadales</taxon>
        <taxon>Shewanellaceae</taxon>
        <taxon>Shewanella</taxon>
    </lineage>
</organism>
<accession>Q087U3</accession>
<comment type="cofactor">
    <cofactor evidence="1">
        <name>Fe(2+)</name>
        <dbReference type="ChEBI" id="CHEBI:29033"/>
    </cofactor>
    <text evidence="1">Binds 1 Fe(2+) ion per subunit.</text>
</comment>
<comment type="cofactor">
    <cofactor evidence="1">
        <name>L-ascorbate</name>
        <dbReference type="ChEBI" id="CHEBI:38290"/>
    </cofactor>
</comment>
<gene>
    <name type="ordered locus">Sfri_0612</name>
</gene>
<proteinExistence type="inferred from homology"/>
<feature type="chain" id="PRO_0000346519" description="PKHD-type hydroxylase Sfri_0612">
    <location>
        <begin position="1"/>
        <end position="226"/>
    </location>
</feature>
<feature type="domain" description="Fe2OG dioxygenase" evidence="1">
    <location>
        <begin position="77"/>
        <end position="177"/>
    </location>
</feature>
<feature type="binding site" evidence="1">
    <location>
        <position position="95"/>
    </location>
    <ligand>
        <name>Fe cation</name>
        <dbReference type="ChEBI" id="CHEBI:24875"/>
    </ligand>
</feature>
<feature type="binding site" evidence="1">
    <location>
        <position position="97"/>
    </location>
    <ligand>
        <name>Fe cation</name>
        <dbReference type="ChEBI" id="CHEBI:24875"/>
    </ligand>
</feature>
<feature type="binding site" evidence="1">
    <location>
        <position position="158"/>
    </location>
    <ligand>
        <name>Fe cation</name>
        <dbReference type="ChEBI" id="CHEBI:24875"/>
    </ligand>
</feature>
<feature type="binding site" evidence="1">
    <location>
        <position position="168"/>
    </location>
    <ligand>
        <name>2-oxoglutarate</name>
        <dbReference type="ChEBI" id="CHEBI:16810"/>
    </ligand>
</feature>
<name>Y612_SHEFN</name>
<sequence length="226" mass="25332">MIVIEQILSKQDVGAYRQQLAECPWGDGRKTAMGMAASVKNNNQADAQHANVRQLANQLLARIGETPKIVSAALPHKIFPPCFNRYNETEEYGYHVDAAIMRIPNTSEVIRSDVSMTVFLSEPEEYDGGELVIATEFGQQQIKLPAGYAVVYPSSSLHKVTAVTRGQRIAAITWMQSMVADVTLRQTLYQLDQSIQNLIKANNTDRAELDNLHNVYHNLIRQFTQL</sequence>